<gene>
    <name evidence="1" type="primary">recF</name>
    <name type="ordered locus">SACE_0005</name>
</gene>
<dbReference type="EMBL" id="AM420293">
    <property type="protein sequence ID" value="CAL99359.1"/>
    <property type="molecule type" value="Genomic_DNA"/>
</dbReference>
<dbReference type="RefSeq" id="WP_009945690.1">
    <property type="nucleotide sequence ID" value="NC_009142.1"/>
</dbReference>
<dbReference type="SMR" id="A4F5N5"/>
<dbReference type="STRING" id="405948.SACE_0005"/>
<dbReference type="KEGG" id="sen:SACE_0005"/>
<dbReference type="eggNOG" id="COG1195">
    <property type="taxonomic scope" value="Bacteria"/>
</dbReference>
<dbReference type="HOGENOM" id="CLU_040267_1_1_11"/>
<dbReference type="OrthoDB" id="9803889at2"/>
<dbReference type="Proteomes" id="UP000006728">
    <property type="component" value="Chromosome"/>
</dbReference>
<dbReference type="GO" id="GO:0005737">
    <property type="term" value="C:cytoplasm"/>
    <property type="evidence" value="ECO:0007669"/>
    <property type="project" value="UniProtKB-SubCell"/>
</dbReference>
<dbReference type="GO" id="GO:0005524">
    <property type="term" value="F:ATP binding"/>
    <property type="evidence" value="ECO:0007669"/>
    <property type="project" value="UniProtKB-UniRule"/>
</dbReference>
<dbReference type="GO" id="GO:0003697">
    <property type="term" value="F:single-stranded DNA binding"/>
    <property type="evidence" value="ECO:0007669"/>
    <property type="project" value="UniProtKB-UniRule"/>
</dbReference>
<dbReference type="GO" id="GO:0006260">
    <property type="term" value="P:DNA replication"/>
    <property type="evidence" value="ECO:0007669"/>
    <property type="project" value="UniProtKB-UniRule"/>
</dbReference>
<dbReference type="GO" id="GO:0000731">
    <property type="term" value="P:DNA synthesis involved in DNA repair"/>
    <property type="evidence" value="ECO:0007669"/>
    <property type="project" value="TreeGrafter"/>
</dbReference>
<dbReference type="GO" id="GO:0006302">
    <property type="term" value="P:double-strand break repair"/>
    <property type="evidence" value="ECO:0007669"/>
    <property type="project" value="TreeGrafter"/>
</dbReference>
<dbReference type="GO" id="GO:0009432">
    <property type="term" value="P:SOS response"/>
    <property type="evidence" value="ECO:0007669"/>
    <property type="project" value="UniProtKB-UniRule"/>
</dbReference>
<dbReference type="CDD" id="cd03242">
    <property type="entry name" value="ABC_RecF"/>
    <property type="match status" value="1"/>
</dbReference>
<dbReference type="Gene3D" id="3.40.50.300">
    <property type="entry name" value="P-loop containing nucleotide triphosphate hydrolases"/>
    <property type="match status" value="1"/>
</dbReference>
<dbReference type="Gene3D" id="1.20.1050.90">
    <property type="entry name" value="RecF/RecN/SMC, N-terminal domain"/>
    <property type="match status" value="1"/>
</dbReference>
<dbReference type="HAMAP" id="MF_00365">
    <property type="entry name" value="RecF"/>
    <property type="match status" value="1"/>
</dbReference>
<dbReference type="InterPro" id="IPR001238">
    <property type="entry name" value="DNA-binding_RecF"/>
</dbReference>
<dbReference type="InterPro" id="IPR018078">
    <property type="entry name" value="DNA-binding_RecF_CS"/>
</dbReference>
<dbReference type="InterPro" id="IPR027417">
    <property type="entry name" value="P-loop_NTPase"/>
</dbReference>
<dbReference type="InterPro" id="IPR003395">
    <property type="entry name" value="RecF/RecN/SMC_N"/>
</dbReference>
<dbReference type="InterPro" id="IPR042174">
    <property type="entry name" value="RecF_2"/>
</dbReference>
<dbReference type="NCBIfam" id="TIGR00611">
    <property type="entry name" value="recf"/>
    <property type="match status" value="1"/>
</dbReference>
<dbReference type="PANTHER" id="PTHR32182">
    <property type="entry name" value="DNA REPLICATION AND REPAIR PROTEIN RECF"/>
    <property type="match status" value="1"/>
</dbReference>
<dbReference type="PANTHER" id="PTHR32182:SF0">
    <property type="entry name" value="DNA REPLICATION AND REPAIR PROTEIN RECF"/>
    <property type="match status" value="1"/>
</dbReference>
<dbReference type="Pfam" id="PF02463">
    <property type="entry name" value="SMC_N"/>
    <property type="match status" value="1"/>
</dbReference>
<dbReference type="SUPFAM" id="SSF52540">
    <property type="entry name" value="P-loop containing nucleoside triphosphate hydrolases"/>
    <property type="match status" value="1"/>
</dbReference>
<dbReference type="PROSITE" id="PS00618">
    <property type="entry name" value="RECF_2"/>
    <property type="match status" value="1"/>
</dbReference>
<reference key="1">
    <citation type="journal article" date="2007" name="Nat. Biotechnol.">
        <title>Complete genome sequence of the erythromycin-producing bacterium Saccharopolyspora erythraea NRRL23338.</title>
        <authorList>
            <person name="Oliynyk M."/>
            <person name="Samborskyy M."/>
            <person name="Lester J.B."/>
            <person name="Mironenko T."/>
            <person name="Scott N."/>
            <person name="Dickens S."/>
            <person name="Haydock S.F."/>
            <person name="Leadlay P.F."/>
        </authorList>
    </citation>
    <scope>NUCLEOTIDE SEQUENCE [LARGE SCALE GENOMIC DNA]</scope>
    <source>
        <strain>ATCC 11635 / DSM 40517 / JCM 4748 / NBRC 13426 / NCIMB 8594 / NRRL 2338</strain>
    </source>
</reference>
<proteinExistence type="inferred from homology"/>
<evidence type="ECO:0000255" key="1">
    <source>
        <dbReference type="HAMAP-Rule" id="MF_00365"/>
    </source>
</evidence>
<feature type="chain" id="PRO_1000048568" description="DNA replication and repair protein RecF">
    <location>
        <begin position="1"/>
        <end position="391"/>
    </location>
</feature>
<feature type="binding site" evidence="1">
    <location>
        <begin position="30"/>
        <end position="37"/>
    </location>
    <ligand>
        <name>ATP</name>
        <dbReference type="ChEBI" id="CHEBI:30616"/>
    </ligand>
</feature>
<organism>
    <name type="scientific">Saccharopolyspora erythraea (strain ATCC 11635 / DSM 40517 / JCM 4748 / NBRC 13426 / NCIMB 8594 / NRRL 2338)</name>
    <dbReference type="NCBI Taxonomy" id="405948"/>
    <lineage>
        <taxon>Bacteria</taxon>
        <taxon>Bacillati</taxon>
        <taxon>Actinomycetota</taxon>
        <taxon>Actinomycetes</taxon>
        <taxon>Pseudonocardiales</taxon>
        <taxon>Pseudonocardiaceae</taxon>
        <taxon>Saccharopolyspora</taxon>
    </lineage>
</organism>
<keyword id="KW-0067">ATP-binding</keyword>
<keyword id="KW-0963">Cytoplasm</keyword>
<keyword id="KW-0227">DNA damage</keyword>
<keyword id="KW-0234">DNA repair</keyword>
<keyword id="KW-0235">DNA replication</keyword>
<keyword id="KW-0238">DNA-binding</keyword>
<keyword id="KW-0547">Nucleotide-binding</keyword>
<keyword id="KW-1185">Reference proteome</keyword>
<keyword id="KW-0742">SOS response</keyword>
<protein>
    <recommendedName>
        <fullName evidence="1">DNA replication and repair protein RecF</fullName>
    </recommendedName>
</protein>
<accession>A4F5N5</accession>
<name>RECF_SACEN</name>
<sequence>MYVRHLQVTDFRSWPHADLTFEPGPTVLVGSNGQGKTNLVEALGYVATLGSHRVATDAPLVRYGTQRAVVRAAVVNHGRELLVELEITPGKANRARINRGAAGKPRDVLGILRTVLFAPEDMAMVRGDPGERRRFLDDLLVARAPRYAGVRSDYDRVLRQRSALLKSAGAAKRGGSGGDLRTLEVWDGHLARYGAELLAGRLDLVAAIAPHVTSAYANVAATAEETAPSGRVADVRYRSSLGESLPEGYGVPRGEPADVEVLEKALLAELERVRAQELERGVSLVGPHRDDLELMLGELPAKGYASHGESWSFALALRLASYHLLAEDGAEPVLILDDVFAELDRRRRSRLAELVAGAEQVLVTAAVAEDVPEELTGVRFDVREGEVRRVE</sequence>
<comment type="function">
    <text evidence="1">The RecF protein is involved in DNA metabolism; it is required for DNA replication and normal SOS inducibility. RecF binds preferentially to single-stranded, linear DNA. It also seems to bind ATP.</text>
</comment>
<comment type="subcellular location">
    <subcellularLocation>
        <location evidence="1">Cytoplasm</location>
    </subcellularLocation>
</comment>
<comment type="similarity">
    <text evidence="1">Belongs to the RecF family.</text>
</comment>